<proteinExistence type="evidence at protein level"/>
<evidence type="ECO:0000250" key="1"/>
<evidence type="ECO:0000255" key="2"/>
<evidence type="ECO:0000255" key="3">
    <source>
        <dbReference type="PROSITE-ProRule" id="PRU00543"/>
    </source>
</evidence>
<evidence type="ECO:0000256" key="4">
    <source>
        <dbReference type="SAM" id="MobiDB-lite"/>
    </source>
</evidence>
<evidence type="ECO:0000269" key="5">
    <source>
    </source>
</evidence>
<evidence type="ECO:0000269" key="6">
    <source>
    </source>
</evidence>
<evidence type="ECO:0000305" key="7"/>
<protein>
    <recommendedName>
        <fullName>Probable ion channel SYM8</fullName>
    </recommendedName>
    <alternativeName>
        <fullName>DMI1 protein homolog</fullName>
    </alternativeName>
</protein>
<comment type="function">
    <text evidence="5 6">Required for both rhizobial and mycorrhizal symbiosis. Involved in Nod-factor-induced calcium spiking. May induce a change in membrane polarization that activates the opening of a calcium channel required for calcium spiking. Might be calcium gated.</text>
</comment>
<comment type="subunit">
    <text evidence="1">Homotetramer.</text>
</comment>
<comment type="subcellular location">
    <subcellularLocation>
        <location evidence="1">Nucleus membrane</location>
        <topology evidence="1">Multi-pass membrane protein</topology>
    </subcellularLocation>
</comment>
<comment type="miscellaneous">
    <text>Can restore nodulation to a Medicago truncatula dmi1 mutant.</text>
</comment>
<comment type="similarity">
    <text evidence="7">Belongs to the castor/pollux (TC 1.A.1.23) family.</text>
</comment>
<organism>
    <name type="scientific">Pisum sativum</name>
    <name type="common">Garden pea</name>
    <name type="synonym">Lathyrus oleraceus</name>
    <dbReference type="NCBI Taxonomy" id="3888"/>
    <lineage>
        <taxon>Eukaryota</taxon>
        <taxon>Viridiplantae</taxon>
        <taxon>Streptophyta</taxon>
        <taxon>Embryophyta</taxon>
        <taxon>Tracheophyta</taxon>
        <taxon>Spermatophyta</taxon>
        <taxon>Magnoliopsida</taxon>
        <taxon>eudicotyledons</taxon>
        <taxon>Gunneridae</taxon>
        <taxon>Pentapetalae</taxon>
        <taxon>rosids</taxon>
        <taxon>fabids</taxon>
        <taxon>Fabales</taxon>
        <taxon>Fabaceae</taxon>
        <taxon>Papilionoideae</taxon>
        <taxon>50 kb inversion clade</taxon>
        <taxon>NPAAA clade</taxon>
        <taxon>Hologalegina</taxon>
        <taxon>IRL clade</taxon>
        <taxon>Fabeae</taxon>
        <taxon>Pisum</taxon>
    </lineage>
</organism>
<reference key="1">
    <citation type="journal article" date="2007" name="Mol. Plant Microbe Interact.">
        <title>Structural implications of mutations in the pea SYM8 symbiosis gene, the DMI1 ortholog, encoding a predicted ion channel.</title>
        <authorList>
            <person name="Edwards A."/>
            <person name="Heckmann A.B."/>
            <person name="Yousafzai F."/>
            <person name="Duc G."/>
            <person name="Downie J.A."/>
        </authorList>
    </citation>
    <scope>NUCLEOTIDE SEQUENCE [MRNA]</scope>
    <scope>FUNCTION</scope>
    <scope>MUTAGENESIS OF ASP-305; ALA-306 AND ARG-351</scope>
    <source>
        <strain>cv. Finale</strain>
        <strain>cv. Sparkle</strain>
    </source>
</reference>
<reference key="2">
    <citation type="submission" date="2007-03" db="EMBL/GenBank/DDBJ databases">
        <title>Amplification of DMI1 homologue from Pisum sativum L.</title>
        <authorList>
            <person name="Novak K."/>
        </authorList>
    </citation>
    <scope>NUCLEOTIDE SEQUENCE [GENOMIC DNA]</scope>
    <source>
        <strain>cv. Finale</strain>
    </source>
</reference>
<reference key="3">
    <citation type="journal article" date="2000" name="Proc. Natl. Acad. Sci. U.S.A.">
        <title>Dissection of nodulation signaling using pea mutants defective for calcium spiking induced by nod factors and chitin oligomers.</title>
        <authorList>
            <person name="Walker S.A."/>
            <person name="Viprey V."/>
            <person name="Downie J.A."/>
        </authorList>
    </citation>
    <scope>FUNCTION</scope>
</reference>
<gene>
    <name type="primary">SYM8</name>
    <name type="synonym">DMI1</name>
</gene>
<feature type="chain" id="PRO_0000395342" description="Probable ion channel SYM8">
    <location>
        <begin position="1"/>
        <end position="894"/>
    </location>
</feature>
<feature type="transmembrane region" description="Helical" evidence="2">
    <location>
        <begin position="134"/>
        <end position="154"/>
    </location>
</feature>
<feature type="transmembrane region" description="Helical" evidence="2">
    <location>
        <begin position="204"/>
        <end position="224"/>
    </location>
</feature>
<feature type="transmembrane region" description="Helical" evidence="2">
    <location>
        <begin position="267"/>
        <end position="287"/>
    </location>
</feature>
<feature type="transmembrane region" description="Helical" evidence="2">
    <location>
        <begin position="319"/>
        <end position="339"/>
    </location>
</feature>
<feature type="domain" description="RCK N-terminal 1" evidence="3">
    <location>
        <begin position="360"/>
        <end position="501"/>
    </location>
</feature>
<feature type="domain" description="RCK N-terminal 2" evidence="3">
    <location>
        <begin position="620"/>
        <end position="769"/>
    </location>
</feature>
<feature type="region of interest" description="Disordered" evidence="4">
    <location>
        <begin position="1"/>
        <end position="124"/>
    </location>
</feature>
<feature type="coiled-coil region" evidence="2">
    <location>
        <begin position="390"/>
        <end position="415"/>
    </location>
</feature>
<feature type="compositionally biased region" description="Polar residues" evidence="4">
    <location>
        <begin position="7"/>
        <end position="16"/>
    </location>
</feature>
<feature type="compositionally biased region" description="Polar residues" evidence="4">
    <location>
        <begin position="24"/>
        <end position="33"/>
    </location>
</feature>
<feature type="compositionally biased region" description="Polar residues" evidence="4">
    <location>
        <begin position="44"/>
        <end position="63"/>
    </location>
</feature>
<feature type="sequence variant" description="In strain: cv. Sparkle.">
    <original>ITPNV</original>
    <variation>LTPNL</variation>
    <location>
        <begin position="87"/>
        <end position="91"/>
    </location>
</feature>
<feature type="mutagenesis site" description="Loss of function." evidence="6">
    <original>D</original>
    <variation>V</variation>
    <location>
        <position position="305"/>
    </location>
</feature>
<feature type="mutagenesis site" description="In sym8-2; loss of function." evidence="6">
    <original>A</original>
    <variation>V</variation>
    <location>
        <position position="306"/>
    </location>
</feature>
<feature type="mutagenesis site" description="In sym8-5; loss of function." evidence="6">
    <original>R</original>
    <variation>I</variation>
    <location>
        <position position="351"/>
    </location>
</feature>
<feature type="sequence conflict" description="In Ref. 2; CAJ00334." evidence="7" ref="2">
    <original>R</original>
    <variation>W</variation>
    <location>
        <position position="61"/>
    </location>
</feature>
<feature type="sequence conflict" description="In Ref. 2; CAJ00334." evidence="7" ref="2">
    <original>A</original>
    <variation>G</variation>
    <location>
        <position position="471"/>
    </location>
</feature>
<keyword id="KW-0175">Coiled coil</keyword>
<keyword id="KW-0407">Ion channel</keyword>
<keyword id="KW-0406">Ion transport</keyword>
<keyword id="KW-0472">Membrane</keyword>
<keyword id="KW-0539">Nucleus</keyword>
<keyword id="KW-0812">Transmembrane</keyword>
<keyword id="KW-1133">Transmembrane helix</keyword>
<keyword id="KW-0813">Transport</keyword>
<dbReference type="EMBL" id="EF447276">
    <property type="protein sequence ID" value="ABX57723.1"/>
    <property type="molecule type" value="mRNA"/>
</dbReference>
<dbReference type="EMBL" id="EF447277">
    <property type="protein sequence ID" value="ABX57724.1"/>
    <property type="molecule type" value="mRNA"/>
</dbReference>
<dbReference type="EMBL" id="EF447280">
    <property type="protein sequence ID" value="ABX57726.1"/>
    <property type="molecule type" value="mRNA"/>
</dbReference>
<dbReference type="EMBL" id="EF447283">
    <property type="protein sequence ID" value="ABX57727.1"/>
    <property type="molecule type" value="mRNA"/>
</dbReference>
<dbReference type="EMBL" id="AJ973194">
    <property type="protein sequence ID" value="CAJ00334.2"/>
    <property type="molecule type" value="Genomic_DNA"/>
</dbReference>
<dbReference type="SMR" id="Q4VY51"/>
<dbReference type="TCDB" id="1.A.1.23.1">
    <property type="family name" value="the voltage-gated ion channel (vic) superfamily"/>
</dbReference>
<dbReference type="GO" id="GO:0031965">
    <property type="term" value="C:nuclear membrane"/>
    <property type="evidence" value="ECO:0007669"/>
    <property type="project" value="UniProtKB-SubCell"/>
</dbReference>
<dbReference type="GO" id="GO:0042802">
    <property type="term" value="F:identical protein binding"/>
    <property type="evidence" value="ECO:0000303"/>
    <property type="project" value="UniProtKB"/>
</dbReference>
<dbReference type="GO" id="GO:0034220">
    <property type="term" value="P:monoatomic ion transmembrane transport"/>
    <property type="evidence" value="ECO:0000303"/>
    <property type="project" value="UniProtKB"/>
</dbReference>
<dbReference type="GO" id="GO:0009877">
    <property type="term" value="P:nodulation"/>
    <property type="evidence" value="ECO:0000315"/>
    <property type="project" value="UniProtKB"/>
</dbReference>
<dbReference type="FunFam" id="3.40.50.720:FF:000176">
    <property type="entry name" value="Probable ion channel POLLUX"/>
    <property type="match status" value="1"/>
</dbReference>
<dbReference type="Gene3D" id="3.40.50.720">
    <property type="entry name" value="NAD(P)-binding Rossmann-like Domain"/>
    <property type="match status" value="1"/>
</dbReference>
<dbReference type="InterPro" id="IPR044849">
    <property type="entry name" value="CASTOR/POLLUX/SYM8-like"/>
</dbReference>
<dbReference type="InterPro" id="IPR010420">
    <property type="entry name" value="CASTOR/POLLUX/SYM8_dom"/>
</dbReference>
<dbReference type="InterPro" id="IPR036291">
    <property type="entry name" value="NAD(P)-bd_dom_sf"/>
</dbReference>
<dbReference type="InterPro" id="IPR003148">
    <property type="entry name" value="RCK_N"/>
</dbReference>
<dbReference type="PANTHER" id="PTHR31563">
    <property type="entry name" value="ION CHANNEL POLLUX-RELATED"/>
    <property type="match status" value="1"/>
</dbReference>
<dbReference type="PANTHER" id="PTHR31563:SF10">
    <property type="entry name" value="ION CHANNEL POLLUX-RELATED"/>
    <property type="match status" value="1"/>
</dbReference>
<dbReference type="Pfam" id="PF06241">
    <property type="entry name" value="Castor_Poll_mid"/>
    <property type="match status" value="1"/>
</dbReference>
<dbReference type="Pfam" id="PF22614">
    <property type="entry name" value="Slo-like_RCK"/>
    <property type="match status" value="1"/>
</dbReference>
<dbReference type="SUPFAM" id="SSF51735">
    <property type="entry name" value="NAD(P)-binding Rossmann-fold domains"/>
    <property type="match status" value="1"/>
</dbReference>
<dbReference type="SUPFAM" id="SSF81324">
    <property type="entry name" value="Voltage-gated potassium channels"/>
    <property type="match status" value="1"/>
</dbReference>
<dbReference type="PROSITE" id="PS51201">
    <property type="entry name" value="RCK_N"/>
    <property type="match status" value="2"/>
</dbReference>
<sequence length="894" mass="99697">MAKSNEEPNSNLNTNKPPLKRTKTLAQQPSLNLRVSIAAADNGIGNSSSSSTKTDFEQQQRNYPSFLGIGSTSRKRRPPPPPKPSNITPNVKPPASDFQTKPHSEPKTSPSSSSPPSLPIAITKQQQQQHSISSPIFYLFVITCVIFVPYSAFLQYKLAKLKDMKLQLCCQIDFCSGNGKTSLQKDVVDDGSFSYYILNADSRTISLYIVLFTLVLPFILYKYIDYLPQMINFSRRTNSNKEDVPLKKRVAYMVDVFFSIYPYAKLLALLFATLFLIAFGGLALYAVTGGSMAEALWHSWTYVADAGNHAETEGMGQRIVSVSISAGGMLIFAMMLGLVSDAISEKVDSLRKGKSEVIERNHVLILGWSDKLGSLLKQLAIANKSVGGGVIVVLAEKEKEEMEMDIAKLEFDFMGTSVICRSGSPLILADLKKVSVSKARAIIVLASDENADQSDARALRVVLSLTGVKEALRGHVVVEMSDLDNEPLVKLVGGELIETVVAHDVIGRLMIQCALQPGLAQIWEDILGFENAEFYIKRWPELDGLLFKDILISFPDAIPCGVKVSADGGKIVINPDDNYVLRDGDEVLVIAEDDDTYAPGPLPEVRKGYFPRIRDPPKYPEKILFCGWRRDIDDMIMVLEAFLAPGSELWMFNEVPEKQRERKLAAGELDVFGLENIKLVHREGNAVIRRHLESLPLETFDSILILADESVEDSVAHSDSRSLATLLLIRDIQSRRLPYRDTKSTSLRLSGFSHNSWIREMQQASDKSIIISEILDSRTRNLVSVSRISDYVLSNELVSMALAMVAEDKQINRVLEELFAEEGNEMCIKPAEFYLFDQEELCFYDIMIRGRTRKEIVIGYRLASQERALINPSEKSMTRKWSLDDVFVVIASGE</sequence>
<name>SYM8_PEA</name>
<accession>Q4VY51</accession>
<accession>A9Q1K1</accession>
<accession>A9Q1K2</accession>
<accession>A9Q1K4</accession>
<accession>A9Q1K5</accession>